<sequence length="143" mass="15463">MAIERTFSIIKPNAVAKNVIGNIFARFEAAGFKIVGTKMLHLTVEQARGFYAEHDGKPFFDGLVEFMTSGPIVVSVLEGENAVQRHRDLLGATNPANALAGTLRADYADSLTENGTHGSDSVESAAREIAYFFGEGEVCPRTR</sequence>
<protein>
    <recommendedName>
        <fullName evidence="1">Nucleoside diphosphate kinase</fullName>
        <shortName evidence="1">NDK</shortName>
        <shortName evidence="1">NDP kinase</shortName>
        <ecNumber evidence="1">2.7.4.6</ecNumber>
    </recommendedName>
    <alternativeName>
        <fullName evidence="1">Nucleoside-2-P kinase</fullName>
    </alternativeName>
</protein>
<organism>
    <name type="scientific">Escherichia coli O139:H28 (strain E24377A / ETEC)</name>
    <dbReference type="NCBI Taxonomy" id="331111"/>
    <lineage>
        <taxon>Bacteria</taxon>
        <taxon>Pseudomonadati</taxon>
        <taxon>Pseudomonadota</taxon>
        <taxon>Gammaproteobacteria</taxon>
        <taxon>Enterobacterales</taxon>
        <taxon>Enterobacteriaceae</taxon>
        <taxon>Escherichia</taxon>
    </lineage>
</organism>
<dbReference type="EC" id="2.7.4.6" evidence="1"/>
<dbReference type="EMBL" id="CP000800">
    <property type="protein sequence ID" value="ABV18956.1"/>
    <property type="molecule type" value="Genomic_DNA"/>
</dbReference>
<dbReference type="RefSeq" id="WP_000963837.1">
    <property type="nucleotide sequence ID" value="NC_009801.1"/>
</dbReference>
<dbReference type="SMR" id="A7ZPW1"/>
<dbReference type="GeneID" id="93774618"/>
<dbReference type="KEGG" id="ecw:EcE24377A_2802"/>
<dbReference type="HOGENOM" id="CLU_060216_8_1_6"/>
<dbReference type="Proteomes" id="UP000001122">
    <property type="component" value="Chromosome"/>
</dbReference>
<dbReference type="GO" id="GO:0005737">
    <property type="term" value="C:cytoplasm"/>
    <property type="evidence" value="ECO:0007669"/>
    <property type="project" value="UniProtKB-SubCell"/>
</dbReference>
<dbReference type="GO" id="GO:0005524">
    <property type="term" value="F:ATP binding"/>
    <property type="evidence" value="ECO:0007669"/>
    <property type="project" value="UniProtKB-UniRule"/>
</dbReference>
<dbReference type="GO" id="GO:0046872">
    <property type="term" value="F:metal ion binding"/>
    <property type="evidence" value="ECO:0007669"/>
    <property type="project" value="UniProtKB-KW"/>
</dbReference>
<dbReference type="GO" id="GO:0004550">
    <property type="term" value="F:nucleoside diphosphate kinase activity"/>
    <property type="evidence" value="ECO:0007669"/>
    <property type="project" value="UniProtKB-UniRule"/>
</dbReference>
<dbReference type="GO" id="GO:0006241">
    <property type="term" value="P:CTP biosynthetic process"/>
    <property type="evidence" value="ECO:0007669"/>
    <property type="project" value="UniProtKB-UniRule"/>
</dbReference>
<dbReference type="GO" id="GO:0006183">
    <property type="term" value="P:GTP biosynthetic process"/>
    <property type="evidence" value="ECO:0007669"/>
    <property type="project" value="UniProtKB-UniRule"/>
</dbReference>
<dbReference type="GO" id="GO:0006228">
    <property type="term" value="P:UTP biosynthetic process"/>
    <property type="evidence" value="ECO:0007669"/>
    <property type="project" value="UniProtKB-UniRule"/>
</dbReference>
<dbReference type="CDD" id="cd04413">
    <property type="entry name" value="NDPk_I"/>
    <property type="match status" value="1"/>
</dbReference>
<dbReference type="FunFam" id="3.30.70.141:FF:000001">
    <property type="entry name" value="Nucleoside diphosphate kinase"/>
    <property type="match status" value="1"/>
</dbReference>
<dbReference type="Gene3D" id="3.30.70.141">
    <property type="entry name" value="Nucleoside diphosphate kinase-like domain"/>
    <property type="match status" value="1"/>
</dbReference>
<dbReference type="HAMAP" id="MF_00451">
    <property type="entry name" value="NDP_kinase"/>
    <property type="match status" value="1"/>
</dbReference>
<dbReference type="InterPro" id="IPR034907">
    <property type="entry name" value="NDK-like_dom"/>
</dbReference>
<dbReference type="InterPro" id="IPR036850">
    <property type="entry name" value="NDK-like_dom_sf"/>
</dbReference>
<dbReference type="InterPro" id="IPR001564">
    <property type="entry name" value="Nucleoside_diP_kinase"/>
</dbReference>
<dbReference type="InterPro" id="IPR023005">
    <property type="entry name" value="Nucleoside_diP_kinase_AS"/>
</dbReference>
<dbReference type="NCBIfam" id="NF001908">
    <property type="entry name" value="PRK00668.1"/>
    <property type="match status" value="1"/>
</dbReference>
<dbReference type="PANTHER" id="PTHR46161">
    <property type="entry name" value="NUCLEOSIDE DIPHOSPHATE KINASE"/>
    <property type="match status" value="1"/>
</dbReference>
<dbReference type="PANTHER" id="PTHR46161:SF3">
    <property type="entry name" value="NUCLEOSIDE DIPHOSPHATE KINASE DDB_G0292928-RELATED"/>
    <property type="match status" value="1"/>
</dbReference>
<dbReference type="Pfam" id="PF00334">
    <property type="entry name" value="NDK"/>
    <property type="match status" value="1"/>
</dbReference>
<dbReference type="PRINTS" id="PR01243">
    <property type="entry name" value="NUCDPKINASE"/>
</dbReference>
<dbReference type="SMART" id="SM00562">
    <property type="entry name" value="NDK"/>
    <property type="match status" value="1"/>
</dbReference>
<dbReference type="SUPFAM" id="SSF54919">
    <property type="entry name" value="Nucleoside diphosphate kinase, NDK"/>
    <property type="match status" value="1"/>
</dbReference>
<dbReference type="PROSITE" id="PS00469">
    <property type="entry name" value="NDPK"/>
    <property type="match status" value="1"/>
</dbReference>
<dbReference type="PROSITE" id="PS51374">
    <property type="entry name" value="NDPK_LIKE"/>
    <property type="match status" value="1"/>
</dbReference>
<gene>
    <name evidence="1" type="primary">ndk</name>
    <name type="ordered locus">EcE24377A_2802</name>
</gene>
<name>NDK_ECO24</name>
<evidence type="ECO:0000255" key="1">
    <source>
        <dbReference type="HAMAP-Rule" id="MF_00451"/>
    </source>
</evidence>
<comment type="function">
    <text evidence="1">Major role in the synthesis of nucleoside triphosphates other than ATP. The ATP gamma phosphate is transferred to the NDP beta phosphate via a ping-pong mechanism, using a phosphorylated active-site intermediate.</text>
</comment>
<comment type="catalytic activity">
    <reaction evidence="1">
        <text>a 2'-deoxyribonucleoside 5'-diphosphate + ATP = a 2'-deoxyribonucleoside 5'-triphosphate + ADP</text>
        <dbReference type="Rhea" id="RHEA:44640"/>
        <dbReference type="ChEBI" id="CHEBI:30616"/>
        <dbReference type="ChEBI" id="CHEBI:61560"/>
        <dbReference type="ChEBI" id="CHEBI:73316"/>
        <dbReference type="ChEBI" id="CHEBI:456216"/>
        <dbReference type="EC" id="2.7.4.6"/>
    </reaction>
</comment>
<comment type="catalytic activity">
    <reaction evidence="1">
        <text>a ribonucleoside 5'-diphosphate + ATP = a ribonucleoside 5'-triphosphate + ADP</text>
        <dbReference type="Rhea" id="RHEA:18113"/>
        <dbReference type="ChEBI" id="CHEBI:30616"/>
        <dbReference type="ChEBI" id="CHEBI:57930"/>
        <dbReference type="ChEBI" id="CHEBI:61557"/>
        <dbReference type="ChEBI" id="CHEBI:456216"/>
        <dbReference type="EC" id="2.7.4.6"/>
    </reaction>
</comment>
<comment type="cofactor">
    <cofactor evidence="1">
        <name>Mg(2+)</name>
        <dbReference type="ChEBI" id="CHEBI:18420"/>
    </cofactor>
</comment>
<comment type="subunit">
    <text evidence="1">Homotetramer.</text>
</comment>
<comment type="subcellular location">
    <subcellularLocation>
        <location evidence="1">Cytoplasm</location>
    </subcellularLocation>
</comment>
<comment type="similarity">
    <text evidence="1">Belongs to the NDK family.</text>
</comment>
<keyword id="KW-0067">ATP-binding</keyword>
<keyword id="KW-0963">Cytoplasm</keyword>
<keyword id="KW-0418">Kinase</keyword>
<keyword id="KW-0460">Magnesium</keyword>
<keyword id="KW-0479">Metal-binding</keyword>
<keyword id="KW-0546">Nucleotide metabolism</keyword>
<keyword id="KW-0547">Nucleotide-binding</keyword>
<keyword id="KW-0597">Phosphoprotein</keyword>
<keyword id="KW-1185">Reference proteome</keyword>
<keyword id="KW-0808">Transferase</keyword>
<reference key="1">
    <citation type="journal article" date="2008" name="J. Bacteriol.">
        <title>The pangenome structure of Escherichia coli: comparative genomic analysis of E. coli commensal and pathogenic isolates.</title>
        <authorList>
            <person name="Rasko D.A."/>
            <person name="Rosovitz M.J."/>
            <person name="Myers G.S.A."/>
            <person name="Mongodin E.F."/>
            <person name="Fricke W.F."/>
            <person name="Gajer P."/>
            <person name="Crabtree J."/>
            <person name="Sebaihia M."/>
            <person name="Thomson N.R."/>
            <person name="Chaudhuri R."/>
            <person name="Henderson I.R."/>
            <person name="Sperandio V."/>
            <person name="Ravel J."/>
        </authorList>
    </citation>
    <scope>NUCLEOTIDE SEQUENCE [LARGE SCALE GENOMIC DNA]</scope>
    <source>
        <strain>E24377A / ETEC</strain>
    </source>
</reference>
<feature type="chain" id="PRO_1000060280" description="Nucleoside diphosphate kinase">
    <location>
        <begin position="1"/>
        <end position="143"/>
    </location>
</feature>
<feature type="active site" description="Pros-phosphohistidine intermediate" evidence="1">
    <location>
        <position position="117"/>
    </location>
</feature>
<feature type="binding site" evidence="1">
    <location>
        <position position="11"/>
    </location>
    <ligand>
        <name>ATP</name>
        <dbReference type="ChEBI" id="CHEBI:30616"/>
    </ligand>
</feature>
<feature type="binding site" evidence="1">
    <location>
        <position position="59"/>
    </location>
    <ligand>
        <name>ATP</name>
        <dbReference type="ChEBI" id="CHEBI:30616"/>
    </ligand>
</feature>
<feature type="binding site" evidence="1">
    <location>
        <position position="87"/>
    </location>
    <ligand>
        <name>ATP</name>
        <dbReference type="ChEBI" id="CHEBI:30616"/>
    </ligand>
</feature>
<feature type="binding site" evidence="1">
    <location>
        <position position="93"/>
    </location>
    <ligand>
        <name>ATP</name>
        <dbReference type="ChEBI" id="CHEBI:30616"/>
    </ligand>
</feature>
<feature type="binding site" evidence="1">
    <location>
        <position position="104"/>
    </location>
    <ligand>
        <name>ATP</name>
        <dbReference type="ChEBI" id="CHEBI:30616"/>
    </ligand>
</feature>
<feature type="binding site" evidence="1">
    <location>
        <position position="114"/>
    </location>
    <ligand>
        <name>ATP</name>
        <dbReference type="ChEBI" id="CHEBI:30616"/>
    </ligand>
</feature>
<accession>A7ZPW1</accession>
<proteinExistence type="inferred from homology"/>